<organism>
    <name type="scientific">Xanthomonas oryzae pv. oryzae (strain MAFF 311018)</name>
    <dbReference type="NCBI Taxonomy" id="342109"/>
    <lineage>
        <taxon>Bacteria</taxon>
        <taxon>Pseudomonadati</taxon>
        <taxon>Pseudomonadota</taxon>
        <taxon>Gammaproteobacteria</taxon>
        <taxon>Lysobacterales</taxon>
        <taxon>Lysobacteraceae</taxon>
        <taxon>Xanthomonas</taxon>
    </lineage>
</organism>
<evidence type="ECO:0000255" key="1">
    <source>
        <dbReference type="HAMAP-Rule" id="MF_01547"/>
    </source>
</evidence>
<name>RLME_XANOM</name>
<comment type="function">
    <text evidence="1">Specifically methylates the uridine in position 2552 of 23S rRNA at the 2'-O position of the ribose in the fully assembled 50S ribosomal subunit.</text>
</comment>
<comment type="catalytic activity">
    <reaction evidence="1">
        <text>uridine(2552) in 23S rRNA + S-adenosyl-L-methionine = 2'-O-methyluridine(2552) in 23S rRNA + S-adenosyl-L-homocysteine + H(+)</text>
        <dbReference type="Rhea" id="RHEA:42720"/>
        <dbReference type="Rhea" id="RHEA-COMP:10202"/>
        <dbReference type="Rhea" id="RHEA-COMP:10203"/>
        <dbReference type="ChEBI" id="CHEBI:15378"/>
        <dbReference type="ChEBI" id="CHEBI:57856"/>
        <dbReference type="ChEBI" id="CHEBI:59789"/>
        <dbReference type="ChEBI" id="CHEBI:65315"/>
        <dbReference type="ChEBI" id="CHEBI:74478"/>
        <dbReference type="EC" id="2.1.1.166"/>
    </reaction>
</comment>
<comment type="subcellular location">
    <subcellularLocation>
        <location evidence="1">Cytoplasm</location>
    </subcellularLocation>
</comment>
<comment type="similarity">
    <text evidence="1">Belongs to the class I-like SAM-binding methyltransferase superfamily. RNA methyltransferase RlmE family.</text>
</comment>
<sequence>MPSRSKSSQRWLKEHFADPYVKKARAEGMRSRAAYKLEELLQRDRLLKPGMVVVDLGAAPGGWSQQVRKSMGDSGRVVALDILDMPALAGVEFLHGDFREQAVLSQFEAMLGDVPVDLVLSDMAPNKSGMDAVDQPRMMHLAELAMEFADAHLKPGGAFLIKLFQGVGSDDYIRELRRRYEKVTIRKPAASRKRSPEVYALGQGKRVQIK</sequence>
<gene>
    <name evidence="1" type="primary">rlmE</name>
    <name evidence="1" type="synonym">ftsJ</name>
    <name evidence="1" type="synonym">rrmJ</name>
    <name type="ordered locus">XOO2802</name>
</gene>
<feature type="chain" id="PRO_0000282813" description="Ribosomal RNA large subunit methyltransferase E">
    <location>
        <begin position="1"/>
        <end position="210"/>
    </location>
</feature>
<feature type="active site" description="Proton acceptor" evidence="1">
    <location>
        <position position="162"/>
    </location>
</feature>
<feature type="binding site" evidence="1">
    <location>
        <position position="61"/>
    </location>
    <ligand>
        <name>S-adenosyl-L-methionine</name>
        <dbReference type="ChEBI" id="CHEBI:59789"/>
    </ligand>
</feature>
<feature type="binding site" evidence="1">
    <location>
        <position position="63"/>
    </location>
    <ligand>
        <name>S-adenosyl-L-methionine</name>
        <dbReference type="ChEBI" id="CHEBI:59789"/>
    </ligand>
</feature>
<feature type="binding site" evidence="1">
    <location>
        <position position="81"/>
    </location>
    <ligand>
        <name>S-adenosyl-L-methionine</name>
        <dbReference type="ChEBI" id="CHEBI:59789"/>
    </ligand>
</feature>
<feature type="binding site" evidence="1">
    <location>
        <position position="97"/>
    </location>
    <ligand>
        <name>S-adenosyl-L-methionine</name>
        <dbReference type="ChEBI" id="CHEBI:59789"/>
    </ligand>
</feature>
<feature type="binding site" evidence="1">
    <location>
        <position position="122"/>
    </location>
    <ligand>
        <name>S-adenosyl-L-methionine</name>
        <dbReference type="ChEBI" id="CHEBI:59789"/>
    </ligand>
</feature>
<proteinExistence type="inferred from homology"/>
<protein>
    <recommendedName>
        <fullName evidence="1">Ribosomal RNA large subunit methyltransferase E</fullName>
        <ecNumber evidence="1">2.1.1.166</ecNumber>
    </recommendedName>
    <alternativeName>
        <fullName evidence="1">23S rRNA Um2552 methyltransferase</fullName>
    </alternativeName>
    <alternativeName>
        <fullName evidence="1">rRNA (uridine-2'-O-)-methyltransferase</fullName>
    </alternativeName>
</protein>
<reference key="1">
    <citation type="journal article" date="2005" name="Jpn. Agric. Res. Q.">
        <title>Genome sequence of Xanthomonas oryzae pv. oryzae suggests contribution of large numbers of effector genes and insertion sequences to its race diversity.</title>
        <authorList>
            <person name="Ochiai H."/>
            <person name="Inoue Y."/>
            <person name="Takeya M."/>
            <person name="Sasaki A."/>
            <person name="Kaku H."/>
        </authorList>
    </citation>
    <scope>NUCLEOTIDE SEQUENCE [LARGE SCALE GENOMIC DNA]</scope>
    <source>
        <strain>MAFF 311018</strain>
    </source>
</reference>
<dbReference type="EC" id="2.1.1.166" evidence="1"/>
<dbReference type="EMBL" id="AP008229">
    <property type="protein sequence ID" value="BAE69557.1"/>
    <property type="molecule type" value="Genomic_DNA"/>
</dbReference>
<dbReference type="RefSeq" id="WP_011408890.1">
    <property type="nucleotide sequence ID" value="NC_007705.1"/>
</dbReference>
<dbReference type="SMR" id="Q2P1M0"/>
<dbReference type="GeneID" id="77337161"/>
<dbReference type="KEGG" id="xom:XOO2802"/>
<dbReference type="HOGENOM" id="CLU_009422_4_0_6"/>
<dbReference type="GO" id="GO:0005737">
    <property type="term" value="C:cytoplasm"/>
    <property type="evidence" value="ECO:0007669"/>
    <property type="project" value="UniProtKB-SubCell"/>
</dbReference>
<dbReference type="GO" id="GO:0008650">
    <property type="term" value="F:rRNA (uridine-2'-O-)-methyltransferase activity"/>
    <property type="evidence" value="ECO:0007669"/>
    <property type="project" value="UniProtKB-UniRule"/>
</dbReference>
<dbReference type="FunFam" id="3.40.50.150:FF:000005">
    <property type="entry name" value="Ribosomal RNA large subunit methyltransferase E"/>
    <property type="match status" value="1"/>
</dbReference>
<dbReference type="Gene3D" id="3.40.50.150">
    <property type="entry name" value="Vaccinia Virus protein VP39"/>
    <property type="match status" value="1"/>
</dbReference>
<dbReference type="HAMAP" id="MF_01547">
    <property type="entry name" value="RNA_methyltr_E"/>
    <property type="match status" value="1"/>
</dbReference>
<dbReference type="InterPro" id="IPR050082">
    <property type="entry name" value="RNA_methyltr_RlmE"/>
</dbReference>
<dbReference type="InterPro" id="IPR002877">
    <property type="entry name" value="RNA_MeTrfase_FtsJ_dom"/>
</dbReference>
<dbReference type="InterPro" id="IPR015507">
    <property type="entry name" value="rRNA-MeTfrase_E"/>
</dbReference>
<dbReference type="InterPro" id="IPR029063">
    <property type="entry name" value="SAM-dependent_MTases_sf"/>
</dbReference>
<dbReference type="NCBIfam" id="NF008390">
    <property type="entry name" value="PRK11188.1"/>
    <property type="match status" value="1"/>
</dbReference>
<dbReference type="PANTHER" id="PTHR10920">
    <property type="entry name" value="RIBOSOMAL RNA METHYLTRANSFERASE"/>
    <property type="match status" value="1"/>
</dbReference>
<dbReference type="PANTHER" id="PTHR10920:SF18">
    <property type="entry name" value="RRNA METHYLTRANSFERASE 2, MITOCHONDRIAL"/>
    <property type="match status" value="1"/>
</dbReference>
<dbReference type="Pfam" id="PF01728">
    <property type="entry name" value="FtsJ"/>
    <property type="match status" value="1"/>
</dbReference>
<dbReference type="PIRSF" id="PIRSF005461">
    <property type="entry name" value="23S_rRNA_mtase"/>
    <property type="match status" value="1"/>
</dbReference>
<dbReference type="SUPFAM" id="SSF53335">
    <property type="entry name" value="S-adenosyl-L-methionine-dependent methyltransferases"/>
    <property type="match status" value="1"/>
</dbReference>
<keyword id="KW-0963">Cytoplasm</keyword>
<keyword id="KW-0489">Methyltransferase</keyword>
<keyword id="KW-0698">rRNA processing</keyword>
<keyword id="KW-0949">S-adenosyl-L-methionine</keyword>
<keyword id="KW-0808">Transferase</keyword>
<accession>Q2P1M0</accession>